<sequence>MTSLLTFCAAALMEITGCFAFWAWLRLDKSPLWLIPGMLALALFAYLLTLADSPLAGRAYAAYGGIYIASALLWGWAIEGNRPDQWDVIGAAICLVGMSVILFGPRALPA</sequence>
<proteinExistence type="inferred from homology"/>
<feature type="chain" id="PRO_1000089253" description="UPF0060 membrane protein Rpal_4363">
    <location>
        <begin position="1"/>
        <end position="110"/>
    </location>
</feature>
<feature type="transmembrane region" description="Helical" evidence="1">
    <location>
        <begin position="4"/>
        <end position="24"/>
    </location>
</feature>
<feature type="transmembrane region" description="Helical" evidence="1">
    <location>
        <begin position="31"/>
        <end position="51"/>
    </location>
</feature>
<feature type="transmembrane region" description="Helical" evidence="1">
    <location>
        <begin position="59"/>
        <end position="79"/>
    </location>
</feature>
<feature type="transmembrane region" description="Helical" evidence="1">
    <location>
        <begin position="88"/>
        <end position="108"/>
    </location>
</feature>
<name>Y4363_RHOPT</name>
<gene>
    <name type="ordered locus">Rpal_4363</name>
</gene>
<accession>B3QI59</accession>
<reference key="1">
    <citation type="submission" date="2008-05" db="EMBL/GenBank/DDBJ databases">
        <title>Complete sequence of Rhodopseudomonas palustris TIE-1.</title>
        <authorList>
            <consortium name="US DOE Joint Genome Institute"/>
            <person name="Lucas S."/>
            <person name="Copeland A."/>
            <person name="Lapidus A."/>
            <person name="Glavina del Rio T."/>
            <person name="Dalin E."/>
            <person name="Tice H."/>
            <person name="Pitluck S."/>
            <person name="Chain P."/>
            <person name="Malfatti S."/>
            <person name="Shin M."/>
            <person name="Vergez L."/>
            <person name="Lang D."/>
            <person name="Schmutz J."/>
            <person name="Larimer F."/>
            <person name="Land M."/>
            <person name="Hauser L."/>
            <person name="Kyrpides N."/>
            <person name="Mikhailova N."/>
            <person name="Emerson D."/>
            <person name="Newman D.K."/>
            <person name="Roden E."/>
            <person name="Richardson P."/>
        </authorList>
    </citation>
    <scope>NUCLEOTIDE SEQUENCE [LARGE SCALE GENOMIC DNA]</scope>
    <source>
        <strain>TIE-1</strain>
    </source>
</reference>
<comment type="subcellular location">
    <subcellularLocation>
        <location evidence="1">Cell inner membrane</location>
        <topology evidence="1">Multi-pass membrane protein</topology>
    </subcellularLocation>
</comment>
<comment type="similarity">
    <text evidence="1">Belongs to the UPF0060 family.</text>
</comment>
<dbReference type="EMBL" id="CP001096">
    <property type="protein sequence ID" value="ACF02859.1"/>
    <property type="molecule type" value="Genomic_DNA"/>
</dbReference>
<dbReference type="RefSeq" id="WP_012497212.1">
    <property type="nucleotide sequence ID" value="NC_011004.1"/>
</dbReference>
<dbReference type="SMR" id="B3QI59"/>
<dbReference type="KEGG" id="rpt:Rpal_4363"/>
<dbReference type="HOGENOM" id="CLU_117653_1_0_5"/>
<dbReference type="OrthoDB" id="123240at2"/>
<dbReference type="Proteomes" id="UP000001725">
    <property type="component" value="Chromosome"/>
</dbReference>
<dbReference type="GO" id="GO:0005886">
    <property type="term" value="C:plasma membrane"/>
    <property type="evidence" value="ECO:0007669"/>
    <property type="project" value="UniProtKB-SubCell"/>
</dbReference>
<dbReference type="HAMAP" id="MF_00010">
    <property type="entry name" value="UPF0060"/>
    <property type="match status" value="1"/>
</dbReference>
<dbReference type="InterPro" id="IPR003844">
    <property type="entry name" value="UPF0060"/>
</dbReference>
<dbReference type="NCBIfam" id="NF002586">
    <property type="entry name" value="PRK02237.1"/>
    <property type="match status" value="1"/>
</dbReference>
<dbReference type="PANTHER" id="PTHR36116">
    <property type="entry name" value="UPF0060 MEMBRANE PROTEIN YNFA"/>
    <property type="match status" value="1"/>
</dbReference>
<dbReference type="PANTHER" id="PTHR36116:SF1">
    <property type="entry name" value="UPF0060 MEMBRANE PROTEIN YNFA"/>
    <property type="match status" value="1"/>
</dbReference>
<dbReference type="Pfam" id="PF02694">
    <property type="entry name" value="UPF0060"/>
    <property type="match status" value="1"/>
</dbReference>
<dbReference type="SUPFAM" id="SSF103481">
    <property type="entry name" value="Multidrug resistance efflux transporter EmrE"/>
    <property type="match status" value="1"/>
</dbReference>
<keyword id="KW-0997">Cell inner membrane</keyword>
<keyword id="KW-1003">Cell membrane</keyword>
<keyword id="KW-0472">Membrane</keyword>
<keyword id="KW-0812">Transmembrane</keyword>
<keyword id="KW-1133">Transmembrane helix</keyword>
<protein>
    <recommendedName>
        <fullName evidence="1">UPF0060 membrane protein Rpal_4363</fullName>
    </recommendedName>
</protein>
<organism>
    <name type="scientific">Rhodopseudomonas palustris (strain TIE-1)</name>
    <dbReference type="NCBI Taxonomy" id="395960"/>
    <lineage>
        <taxon>Bacteria</taxon>
        <taxon>Pseudomonadati</taxon>
        <taxon>Pseudomonadota</taxon>
        <taxon>Alphaproteobacteria</taxon>
        <taxon>Hyphomicrobiales</taxon>
        <taxon>Nitrobacteraceae</taxon>
        <taxon>Rhodopseudomonas</taxon>
    </lineage>
</organism>
<evidence type="ECO:0000255" key="1">
    <source>
        <dbReference type="HAMAP-Rule" id="MF_00010"/>
    </source>
</evidence>